<organism>
    <name type="scientific">Plasmodium falciparum</name>
    <dbReference type="NCBI Taxonomy" id="5833"/>
    <lineage>
        <taxon>Eukaryota</taxon>
        <taxon>Sar</taxon>
        <taxon>Alveolata</taxon>
        <taxon>Apicomplexa</taxon>
        <taxon>Aconoidasida</taxon>
        <taxon>Haemosporida</taxon>
        <taxon>Plasmodiidae</taxon>
        <taxon>Plasmodium</taxon>
        <taxon>Plasmodium (Laverania)</taxon>
    </lineage>
</organism>
<gene>
    <name type="primary">GGI.R1</name>
</gene>
<name>G6PI_PLAFA</name>
<keyword id="KW-0963">Cytoplasm</keyword>
<keyword id="KW-0312">Gluconeogenesis</keyword>
<keyword id="KW-0324">Glycolysis</keyword>
<keyword id="KW-0413">Isomerase</keyword>
<proteinExistence type="inferred from homology"/>
<protein>
    <recommendedName>
        <fullName>Glucose-6-phosphate isomerase</fullName>
        <shortName>GPI</shortName>
        <ecNumber>5.3.1.9</ecNumber>
    </recommendedName>
    <alternativeName>
        <fullName>Phosphoglucose isomerase</fullName>
        <shortName>PGI</shortName>
    </alternativeName>
    <alternativeName>
        <fullName>Phosphohexose isomerase</fullName>
        <shortName>PHI</shortName>
    </alternativeName>
</protein>
<comment type="catalytic activity">
    <reaction>
        <text>alpha-D-glucose 6-phosphate = beta-D-fructose 6-phosphate</text>
        <dbReference type="Rhea" id="RHEA:11816"/>
        <dbReference type="ChEBI" id="CHEBI:57634"/>
        <dbReference type="ChEBI" id="CHEBI:58225"/>
        <dbReference type="EC" id="5.3.1.9"/>
    </reaction>
</comment>
<comment type="pathway">
    <text>Carbohydrate degradation; glycolysis; D-glyceraldehyde 3-phosphate and glycerone phosphate from D-glucose: step 2/4.</text>
</comment>
<comment type="subunit">
    <text>Homodimer.</text>
</comment>
<comment type="subcellular location">
    <subcellularLocation>
        <location>Cytoplasm</location>
    </subcellularLocation>
</comment>
<comment type="similarity">
    <text evidence="2">Belongs to the GPI family.</text>
</comment>
<evidence type="ECO:0000250" key="1"/>
<evidence type="ECO:0000305" key="2"/>
<dbReference type="EC" id="5.3.1.9"/>
<dbReference type="EMBL" id="J05544">
    <property type="protein sequence ID" value="AAA29610.1"/>
    <property type="molecule type" value="Genomic_DNA"/>
</dbReference>
<dbReference type="PIR" id="A36567">
    <property type="entry name" value="NUZQF"/>
</dbReference>
<dbReference type="SMR" id="P18240"/>
<dbReference type="EnsemblProtists" id="CZU00058">
    <property type="protein sequence ID" value="CZU00058"/>
    <property type="gene ID" value="PF3D7_1436000"/>
</dbReference>
<dbReference type="VEuPathDB" id="PlasmoDB:PF3D7_1436000"/>
<dbReference type="VEuPathDB" id="PlasmoDB:Pf7G8-2_000509800"/>
<dbReference type="VEuPathDB" id="PlasmoDB:Pf7G8_140041200"/>
<dbReference type="VEuPathDB" id="PlasmoDB:PfCD01_140041400"/>
<dbReference type="VEuPathDB" id="PlasmoDB:PfDd2_140040400"/>
<dbReference type="VEuPathDB" id="PlasmoDB:PfGA01_140041500"/>
<dbReference type="VEuPathDB" id="PlasmoDB:PfGB4_140042100"/>
<dbReference type="VEuPathDB" id="PlasmoDB:PfGN01_140041300"/>
<dbReference type="VEuPathDB" id="PlasmoDB:PfHB3_140041700"/>
<dbReference type="VEuPathDB" id="PlasmoDB:PfIT_140042400"/>
<dbReference type="VEuPathDB" id="PlasmoDB:PfKE01_140040900"/>
<dbReference type="VEuPathDB" id="PlasmoDB:PfKH01_140041500"/>
<dbReference type="VEuPathDB" id="PlasmoDB:PfKH02_140041700"/>
<dbReference type="VEuPathDB" id="PlasmoDB:PfML01_140041400"/>
<dbReference type="VEuPathDB" id="PlasmoDB:PfNF135_140040200"/>
<dbReference type="VEuPathDB" id="PlasmoDB:PfNF166_140038900"/>
<dbReference type="VEuPathDB" id="PlasmoDB:PfNF54_140039800"/>
<dbReference type="VEuPathDB" id="PlasmoDB:PfSD01_140039300"/>
<dbReference type="VEuPathDB" id="PlasmoDB:PfSN01_140043200"/>
<dbReference type="VEuPathDB" id="PlasmoDB:PfTG01_140041300"/>
<dbReference type="SABIO-RK" id="P18240"/>
<dbReference type="UniPathway" id="UPA00109">
    <property type="reaction ID" value="UER00181"/>
</dbReference>
<dbReference type="GO" id="GO:0005829">
    <property type="term" value="C:cytosol"/>
    <property type="evidence" value="ECO:0007669"/>
    <property type="project" value="TreeGrafter"/>
</dbReference>
<dbReference type="GO" id="GO:0097367">
    <property type="term" value="F:carbohydrate derivative binding"/>
    <property type="evidence" value="ECO:0007669"/>
    <property type="project" value="InterPro"/>
</dbReference>
<dbReference type="GO" id="GO:0004347">
    <property type="term" value="F:glucose-6-phosphate isomerase activity"/>
    <property type="evidence" value="ECO:0007669"/>
    <property type="project" value="UniProtKB-EC"/>
</dbReference>
<dbReference type="GO" id="GO:0048029">
    <property type="term" value="F:monosaccharide binding"/>
    <property type="evidence" value="ECO:0007669"/>
    <property type="project" value="TreeGrafter"/>
</dbReference>
<dbReference type="GO" id="GO:0006094">
    <property type="term" value="P:gluconeogenesis"/>
    <property type="evidence" value="ECO:0007669"/>
    <property type="project" value="UniProtKB-KW"/>
</dbReference>
<dbReference type="GO" id="GO:0051156">
    <property type="term" value="P:glucose 6-phosphate metabolic process"/>
    <property type="evidence" value="ECO:0007669"/>
    <property type="project" value="TreeGrafter"/>
</dbReference>
<dbReference type="GO" id="GO:0006096">
    <property type="term" value="P:glycolytic process"/>
    <property type="evidence" value="ECO:0007669"/>
    <property type="project" value="UniProtKB-UniPathway"/>
</dbReference>
<dbReference type="CDD" id="cd05015">
    <property type="entry name" value="SIS_PGI_1"/>
    <property type="match status" value="1"/>
</dbReference>
<dbReference type="CDD" id="cd05016">
    <property type="entry name" value="SIS_PGI_2"/>
    <property type="match status" value="1"/>
</dbReference>
<dbReference type="Gene3D" id="1.10.1390.10">
    <property type="match status" value="1"/>
</dbReference>
<dbReference type="Gene3D" id="3.40.50.10490">
    <property type="entry name" value="Glucose-6-phosphate isomerase like protein, domain 1"/>
    <property type="match status" value="2"/>
</dbReference>
<dbReference type="HAMAP" id="MF_00473">
    <property type="entry name" value="G6P_isomerase"/>
    <property type="match status" value="1"/>
</dbReference>
<dbReference type="InterPro" id="IPR001672">
    <property type="entry name" value="G6P_Isomerase"/>
</dbReference>
<dbReference type="InterPro" id="IPR023096">
    <property type="entry name" value="G6P_Isomerase_C"/>
</dbReference>
<dbReference type="InterPro" id="IPR018189">
    <property type="entry name" value="Phosphoglucose_isomerase_CS"/>
</dbReference>
<dbReference type="InterPro" id="IPR046348">
    <property type="entry name" value="SIS_dom_sf"/>
</dbReference>
<dbReference type="InterPro" id="IPR035476">
    <property type="entry name" value="SIS_PGI_1"/>
</dbReference>
<dbReference type="InterPro" id="IPR035482">
    <property type="entry name" value="SIS_PGI_2"/>
</dbReference>
<dbReference type="NCBIfam" id="NF001211">
    <property type="entry name" value="PRK00179.1"/>
    <property type="match status" value="1"/>
</dbReference>
<dbReference type="PANTHER" id="PTHR11469">
    <property type="entry name" value="GLUCOSE-6-PHOSPHATE ISOMERASE"/>
    <property type="match status" value="1"/>
</dbReference>
<dbReference type="PANTHER" id="PTHR11469:SF1">
    <property type="entry name" value="GLUCOSE-6-PHOSPHATE ISOMERASE"/>
    <property type="match status" value="1"/>
</dbReference>
<dbReference type="Pfam" id="PF00342">
    <property type="entry name" value="PGI"/>
    <property type="match status" value="1"/>
</dbReference>
<dbReference type="PRINTS" id="PR00662">
    <property type="entry name" value="G6PISOMERASE"/>
</dbReference>
<dbReference type="SUPFAM" id="SSF53697">
    <property type="entry name" value="SIS domain"/>
    <property type="match status" value="1"/>
</dbReference>
<dbReference type="PROSITE" id="PS00765">
    <property type="entry name" value="P_GLUCOSE_ISOMERASE_1"/>
    <property type="match status" value="1"/>
</dbReference>
<dbReference type="PROSITE" id="PS00174">
    <property type="entry name" value="P_GLUCOSE_ISOMERASE_2"/>
    <property type="match status" value="1"/>
</dbReference>
<dbReference type="PROSITE" id="PS51463">
    <property type="entry name" value="P_GLUCOSE_ISOMERASE_3"/>
    <property type="match status" value="1"/>
</dbReference>
<accession>P18240</accession>
<reference key="1">
    <citation type="journal article" date="1990" name="J. Biol. Chem.">
        <title>Cloning metabolic pathway genes by complementation in Escherichia coli. Isolation and expression of Plasmodium falciparum glucose phosphate isomerase.</title>
        <authorList>
            <person name="Kaslow D.C."/>
            <person name="Hill S."/>
        </authorList>
    </citation>
    <scope>NUCLEOTIDE SEQUENCE [GENOMIC DNA]</scope>
</reference>
<feature type="chain" id="PRO_0000180547" description="Glucose-6-phosphate isomerase">
    <location>
        <begin position="1"/>
        <end position="591"/>
    </location>
</feature>
<feature type="active site" description="Proton donor" evidence="1">
    <location>
        <position position="380"/>
    </location>
</feature>
<feature type="active site" evidence="1">
    <location>
        <position position="411"/>
    </location>
</feature>
<feature type="active site" evidence="1">
    <location>
        <position position="540"/>
    </location>
</feature>
<sequence length="591" mass="68766">MNMEITNLKSYKELVTLSAEEKTKDLKDYLNDKNRSESLIKKFKNFYMDLSRQRYSEKTLNKLVEYAEEVELKKKVEKTFMGEKVNMTENRSVLHTALRIPIEKINTHKIIIDNKNVLEDVHGVLKKIEKYSDDIRNGVIKTCKNTKFKNVICIGIGGSYLGTEFVYEAMKYYYYNMELNKNEKDQVNNFNNNYDQDNVFNVRFLANVDPNDVNRAIQNLDQYDTLVIIISKTFTTAETMLNARSIKKWLSLKIKDDENLSKHMVAVSTNLKLTDEFGISRDNVFEFWDWVGGRFSVTSSVGILPLSIAFGYKNMRNFLNGCHDMDEHFLHADLKENIPVLLALTSFYNSHFFDYKNVAILPYFQNLLKFSAHIQQLSMESNGKSVDRNNQPIHYNTCQVYFGEPGTNGQHSFYQLIHQGQVIPVELIGFKHSHFPIKFDKEVVSNHDELMTNFFAQADALAIGKTYEQVKEENEKNKMSPELLTHKVFNGNRPSTLLLFDELNFYTCGLLLSLYESRIVAEGFLLNINSFDQWGVELGKVLAKEVRNYFNDTRNQKKSDNTYNFNESTKNFIKLLLVQIKKKKKINTNLK</sequence>